<evidence type="ECO:0000255" key="1">
    <source>
        <dbReference type="HAMAP-Rule" id="MF_00930"/>
    </source>
</evidence>
<keyword id="KW-0238">DNA-binding</keyword>
<keyword id="KW-1185">Reference proteome</keyword>
<keyword id="KW-0804">Transcription</keyword>
<keyword id="KW-0805">Transcription regulation</keyword>
<accession>Q9KNL7</accession>
<feature type="chain" id="PRO_0000176990" description="Transcription elongation factor GreB">
    <location>
        <begin position="1"/>
        <end position="161"/>
    </location>
</feature>
<comment type="function">
    <text evidence="1">Necessary for efficient RNA polymerase transcription elongation past template-encoded arresting sites. The arresting sites in DNA have the property of trapping a certain fraction of elongating RNA polymerases that pass through, resulting in locked ternary complexes. Cleavage of the nascent transcript by cleavage factors such as GreA or GreB allows the resumption of elongation from the new 3'terminus. GreB releases sequences of up to 9 nucleotides in length.</text>
</comment>
<comment type="similarity">
    <text evidence="1">Belongs to the GreA/GreB family. GreB subfamily.</text>
</comment>
<sequence>MKTKLITRAGYNKLKQELDYLWKEQRPEITQKVSWAASLGDRSENADYTYNKRLLRQIDRRVRFLSKLLPELKIVDYSPQQEGKVFFGAWVEIENEAGEVKKFRIVGPEEIYGDAKDYISIDSPMARALLKKQVDEEFQVHTPTGIKEWFINSIEYEKGEL</sequence>
<dbReference type="EMBL" id="AE003852">
    <property type="protein sequence ID" value="AAF95855.1"/>
    <property type="molecule type" value="Genomic_DNA"/>
</dbReference>
<dbReference type="PIR" id="D82042">
    <property type="entry name" value="D82042"/>
</dbReference>
<dbReference type="RefSeq" id="NP_232342.1">
    <property type="nucleotide sequence ID" value="NC_002505.1"/>
</dbReference>
<dbReference type="RefSeq" id="WP_000850496.1">
    <property type="nucleotide sequence ID" value="NZ_LT906614.1"/>
</dbReference>
<dbReference type="SMR" id="Q9KNL7"/>
<dbReference type="STRING" id="243277.VC_2715"/>
<dbReference type="DNASU" id="2615543"/>
<dbReference type="EnsemblBacteria" id="AAF95855">
    <property type="protein sequence ID" value="AAF95855"/>
    <property type="gene ID" value="VC_2715"/>
</dbReference>
<dbReference type="KEGG" id="vch:VC_2715"/>
<dbReference type="PATRIC" id="fig|243277.26.peg.2590"/>
<dbReference type="eggNOG" id="COG0782">
    <property type="taxonomic scope" value="Bacteria"/>
</dbReference>
<dbReference type="HOGENOM" id="CLU_101379_3_0_6"/>
<dbReference type="Proteomes" id="UP000000584">
    <property type="component" value="Chromosome 1"/>
</dbReference>
<dbReference type="GO" id="GO:0003677">
    <property type="term" value="F:DNA binding"/>
    <property type="evidence" value="ECO:0007669"/>
    <property type="project" value="UniProtKB-UniRule"/>
</dbReference>
<dbReference type="GO" id="GO:0070063">
    <property type="term" value="F:RNA polymerase binding"/>
    <property type="evidence" value="ECO:0007669"/>
    <property type="project" value="InterPro"/>
</dbReference>
<dbReference type="GO" id="GO:0006354">
    <property type="term" value="P:DNA-templated transcription elongation"/>
    <property type="evidence" value="ECO:0000318"/>
    <property type="project" value="GO_Central"/>
</dbReference>
<dbReference type="GO" id="GO:0032784">
    <property type="term" value="P:regulation of DNA-templated transcription elongation"/>
    <property type="evidence" value="ECO:0007669"/>
    <property type="project" value="UniProtKB-UniRule"/>
</dbReference>
<dbReference type="FunFam" id="1.10.287.180:FF:000001">
    <property type="entry name" value="Transcription elongation factor GreA"/>
    <property type="match status" value="1"/>
</dbReference>
<dbReference type="FunFam" id="3.10.50.30:FF:000001">
    <property type="entry name" value="Transcription elongation factor GreA"/>
    <property type="match status" value="1"/>
</dbReference>
<dbReference type="Gene3D" id="3.10.50.30">
    <property type="entry name" value="Transcription elongation factor, GreA/GreB, C-terminal domain"/>
    <property type="match status" value="1"/>
</dbReference>
<dbReference type="Gene3D" id="1.10.287.180">
    <property type="entry name" value="Transcription elongation factor, GreA/GreB, N-terminal domain"/>
    <property type="match status" value="1"/>
</dbReference>
<dbReference type="HAMAP" id="MF_00105">
    <property type="entry name" value="GreA_GreB"/>
    <property type="match status" value="1"/>
</dbReference>
<dbReference type="HAMAP" id="MF_00930">
    <property type="entry name" value="GreB"/>
    <property type="match status" value="1"/>
</dbReference>
<dbReference type="InterPro" id="IPR036953">
    <property type="entry name" value="GreA/GreB_C_sf"/>
</dbReference>
<dbReference type="InterPro" id="IPR018151">
    <property type="entry name" value="TF_GreA/GreB_CS"/>
</dbReference>
<dbReference type="InterPro" id="IPR028624">
    <property type="entry name" value="Tscrpt_elong_fac_GreA/B"/>
</dbReference>
<dbReference type="InterPro" id="IPR001437">
    <property type="entry name" value="Tscrpt_elong_fac_GreA/B_C"/>
</dbReference>
<dbReference type="InterPro" id="IPR023459">
    <property type="entry name" value="Tscrpt_elong_fac_GreA/B_fam"/>
</dbReference>
<dbReference type="InterPro" id="IPR022691">
    <property type="entry name" value="Tscrpt_elong_fac_GreA/B_N"/>
</dbReference>
<dbReference type="InterPro" id="IPR036805">
    <property type="entry name" value="Tscrpt_elong_fac_GreA/B_N_sf"/>
</dbReference>
<dbReference type="InterPro" id="IPR006358">
    <property type="entry name" value="Tscrpt_elong_fac_GreB"/>
</dbReference>
<dbReference type="NCBIfam" id="TIGR01461">
    <property type="entry name" value="greB"/>
    <property type="match status" value="1"/>
</dbReference>
<dbReference type="NCBIfam" id="NF002506">
    <property type="entry name" value="PRK01885.1"/>
    <property type="match status" value="1"/>
</dbReference>
<dbReference type="PANTHER" id="PTHR30437">
    <property type="entry name" value="TRANSCRIPTION ELONGATION FACTOR GREA"/>
    <property type="match status" value="1"/>
</dbReference>
<dbReference type="PANTHER" id="PTHR30437:SF6">
    <property type="entry name" value="TRANSCRIPTION ELONGATION FACTOR GREB"/>
    <property type="match status" value="1"/>
</dbReference>
<dbReference type="Pfam" id="PF01272">
    <property type="entry name" value="GreA_GreB"/>
    <property type="match status" value="1"/>
</dbReference>
<dbReference type="Pfam" id="PF03449">
    <property type="entry name" value="GreA_GreB_N"/>
    <property type="match status" value="1"/>
</dbReference>
<dbReference type="PIRSF" id="PIRSF006092">
    <property type="entry name" value="GreA_GreB"/>
    <property type="match status" value="1"/>
</dbReference>
<dbReference type="SUPFAM" id="SSF54534">
    <property type="entry name" value="FKBP-like"/>
    <property type="match status" value="1"/>
</dbReference>
<dbReference type="SUPFAM" id="SSF46557">
    <property type="entry name" value="GreA transcript cleavage protein, N-terminal domain"/>
    <property type="match status" value="1"/>
</dbReference>
<dbReference type="PROSITE" id="PS00829">
    <property type="entry name" value="GREAB_1"/>
    <property type="match status" value="1"/>
</dbReference>
<dbReference type="PROSITE" id="PS00830">
    <property type="entry name" value="GREAB_2"/>
    <property type="match status" value="1"/>
</dbReference>
<reference key="1">
    <citation type="journal article" date="2000" name="Nature">
        <title>DNA sequence of both chromosomes of the cholera pathogen Vibrio cholerae.</title>
        <authorList>
            <person name="Heidelberg J.F."/>
            <person name="Eisen J.A."/>
            <person name="Nelson W.C."/>
            <person name="Clayton R.A."/>
            <person name="Gwinn M.L."/>
            <person name="Dodson R.J."/>
            <person name="Haft D.H."/>
            <person name="Hickey E.K."/>
            <person name="Peterson J.D."/>
            <person name="Umayam L.A."/>
            <person name="Gill S.R."/>
            <person name="Nelson K.E."/>
            <person name="Read T.D."/>
            <person name="Tettelin H."/>
            <person name="Richardson D.L."/>
            <person name="Ermolaeva M.D."/>
            <person name="Vamathevan J.J."/>
            <person name="Bass S."/>
            <person name="Qin H."/>
            <person name="Dragoi I."/>
            <person name="Sellers P."/>
            <person name="McDonald L.A."/>
            <person name="Utterback T.R."/>
            <person name="Fleischmann R.D."/>
            <person name="Nierman W.C."/>
            <person name="White O."/>
            <person name="Salzberg S.L."/>
            <person name="Smith H.O."/>
            <person name="Colwell R.R."/>
            <person name="Mekalanos J.J."/>
            <person name="Venter J.C."/>
            <person name="Fraser C.M."/>
        </authorList>
    </citation>
    <scope>NUCLEOTIDE SEQUENCE [LARGE SCALE GENOMIC DNA]</scope>
    <source>
        <strain>ATCC 39315 / El Tor Inaba N16961</strain>
    </source>
</reference>
<proteinExistence type="inferred from homology"/>
<name>GREB_VIBCH</name>
<protein>
    <recommendedName>
        <fullName evidence="1">Transcription elongation factor GreB</fullName>
    </recommendedName>
    <alternativeName>
        <fullName evidence="1">Transcript cleavage factor GreB</fullName>
    </alternativeName>
</protein>
<organism>
    <name type="scientific">Vibrio cholerae serotype O1 (strain ATCC 39315 / El Tor Inaba N16961)</name>
    <dbReference type="NCBI Taxonomy" id="243277"/>
    <lineage>
        <taxon>Bacteria</taxon>
        <taxon>Pseudomonadati</taxon>
        <taxon>Pseudomonadota</taxon>
        <taxon>Gammaproteobacteria</taxon>
        <taxon>Vibrionales</taxon>
        <taxon>Vibrionaceae</taxon>
        <taxon>Vibrio</taxon>
    </lineage>
</organism>
<gene>
    <name evidence="1" type="primary">greB</name>
    <name type="ordered locus">VC_2715</name>
</gene>